<keyword id="KW-0143">Chaperone</keyword>
<keyword id="KW-0963">Cytoplasm</keyword>
<name>CH10_RHOCA</name>
<accession>P95677</accession>
<proteinExistence type="inferred from homology"/>
<dbReference type="EMBL" id="S82593">
    <property type="protein sequence ID" value="AAB37531.1"/>
    <property type="molecule type" value="Genomic_DNA"/>
</dbReference>
<dbReference type="RefSeq" id="WP_013068186.1">
    <property type="nucleotide sequence ID" value="NZ_VIBE01000001.1"/>
</dbReference>
<dbReference type="SMR" id="P95677"/>
<dbReference type="OMA" id="KVFYRQW"/>
<dbReference type="GO" id="GO:0005737">
    <property type="term" value="C:cytoplasm"/>
    <property type="evidence" value="ECO:0007669"/>
    <property type="project" value="UniProtKB-SubCell"/>
</dbReference>
<dbReference type="GO" id="GO:0005524">
    <property type="term" value="F:ATP binding"/>
    <property type="evidence" value="ECO:0007669"/>
    <property type="project" value="InterPro"/>
</dbReference>
<dbReference type="GO" id="GO:0046872">
    <property type="term" value="F:metal ion binding"/>
    <property type="evidence" value="ECO:0007669"/>
    <property type="project" value="TreeGrafter"/>
</dbReference>
<dbReference type="GO" id="GO:0044183">
    <property type="term" value="F:protein folding chaperone"/>
    <property type="evidence" value="ECO:0007669"/>
    <property type="project" value="InterPro"/>
</dbReference>
<dbReference type="GO" id="GO:0051087">
    <property type="term" value="F:protein-folding chaperone binding"/>
    <property type="evidence" value="ECO:0007669"/>
    <property type="project" value="TreeGrafter"/>
</dbReference>
<dbReference type="GO" id="GO:0051082">
    <property type="term" value="F:unfolded protein binding"/>
    <property type="evidence" value="ECO:0007669"/>
    <property type="project" value="TreeGrafter"/>
</dbReference>
<dbReference type="GO" id="GO:0051085">
    <property type="term" value="P:chaperone cofactor-dependent protein refolding"/>
    <property type="evidence" value="ECO:0007669"/>
    <property type="project" value="TreeGrafter"/>
</dbReference>
<dbReference type="CDD" id="cd00320">
    <property type="entry name" value="cpn10"/>
    <property type="match status" value="1"/>
</dbReference>
<dbReference type="FunFam" id="2.30.33.40:FF:000001">
    <property type="entry name" value="10 kDa chaperonin"/>
    <property type="match status" value="1"/>
</dbReference>
<dbReference type="Gene3D" id="2.30.33.40">
    <property type="entry name" value="GroES chaperonin"/>
    <property type="match status" value="1"/>
</dbReference>
<dbReference type="HAMAP" id="MF_00580">
    <property type="entry name" value="CH10"/>
    <property type="match status" value="1"/>
</dbReference>
<dbReference type="InterPro" id="IPR020818">
    <property type="entry name" value="Chaperonin_GroES"/>
</dbReference>
<dbReference type="InterPro" id="IPR037124">
    <property type="entry name" value="Chaperonin_GroES_sf"/>
</dbReference>
<dbReference type="InterPro" id="IPR018369">
    <property type="entry name" value="Chaprnonin_Cpn10_CS"/>
</dbReference>
<dbReference type="InterPro" id="IPR011032">
    <property type="entry name" value="GroES-like_sf"/>
</dbReference>
<dbReference type="NCBIfam" id="NF001527">
    <property type="entry name" value="PRK00364.1-2"/>
    <property type="match status" value="1"/>
</dbReference>
<dbReference type="NCBIfam" id="NF001529">
    <property type="entry name" value="PRK00364.1-5"/>
    <property type="match status" value="1"/>
</dbReference>
<dbReference type="NCBIfam" id="NF001531">
    <property type="entry name" value="PRK00364.2-2"/>
    <property type="match status" value="1"/>
</dbReference>
<dbReference type="NCBIfam" id="NF001533">
    <property type="entry name" value="PRK00364.2-4"/>
    <property type="match status" value="1"/>
</dbReference>
<dbReference type="PANTHER" id="PTHR10772">
    <property type="entry name" value="10 KDA HEAT SHOCK PROTEIN"/>
    <property type="match status" value="1"/>
</dbReference>
<dbReference type="PANTHER" id="PTHR10772:SF58">
    <property type="entry name" value="CO-CHAPERONIN GROES"/>
    <property type="match status" value="1"/>
</dbReference>
<dbReference type="Pfam" id="PF00166">
    <property type="entry name" value="Cpn10"/>
    <property type="match status" value="1"/>
</dbReference>
<dbReference type="PRINTS" id="PR00297">
    <property type="entry name" value="CHAPERONIN10"/>
</dbReference>
<dbReference type="SMART" id="SM00883">
    <property type="entry name" value="Cpn10"/>
    <property type="match status" value="1"/>
</dbReference>
<dbReference type="SUPFAM" id="SSF50129">
    <property type="entry name" value="GroES-like"/>
    <property type="match status" value="1"/>
</dbReference>
<dbReference type="PROSITE" id="PS00681">
    <property type="entry name" value="CHAPERONINS_CPN10"/>
    <property type="match status" value="1"/>
</dbReference>
<gene>
    <name evidence="1" type="primary">groES</name>
    <name evidence="1" type="synonym">groS</name>
</gene>
<feature type="chain" id="PRO_0000174823" description="Co-chaperonin GroES">
    <location>
        <begin position="1"/>
        <end position="95"/>
    </location>
</feature>
<evidence type="ECO:0000255" key="1">
    <source>
        <dbReference type="HAMAP-Rule" id="MF_00580"/>
    </source>
</evidence>
<evidence type="ECO:0000305" key="2"/>
<sequence length="95" mass="10104">MAFKPLHDRVLVKRVQSEEKTKGGLIIPDTAKEKPAEGEVVAVGAGARKDSGELIAPAVAVGDRILFGKWSGTEVTLDGVEMLIMKESDIMGIIS</sequence>
<reference key="1">
    <citation type="journal article" date="1996" name="Arch. Microbiol.">
        <title>Molecular analysis of the Rhodobacter capsulatus chaperonin (groESL) operon: purification and characterization of Cpn60.</title>
        <authorList>
            <person name="Hubner P."/>
            <person name="Dame G."/>
            <person name="Sandmeier U."/>
            <person name="Vandekerckhove J."/>
            <person name="Beyer P."/>
            <person name="Tadros M.H."/>
        </authorList>
    </citation>
    <scope>NUCLEOTIDE SEQUENCE [GENOMIC DNA]</scope>
    <source>
        <strain>ATCC 33303 / B10</strain>
    </source>
</reference>
<organism>
    <name type="scientific">Rhodobacter capsulatus</name>
    <name type="common">Rhodopseudomonas capsulata</name>
    <dbReference type="NCBI Taxonomy" id="1061"/>
    <lineage>
        <taxon>Bacteria</taxon>
        <taxon>Pseudomonadati</taxon>
        <taxon>Pseudomonadota</taxon>
        <taxon>Alphaproteobacteria</taxon>
        <taxon>Rhodobacterales</taxon>
        <taxon>Rhodobacter group</taxon>
        <taxon>Rhodobacter</taxon>
    </lineage>
</organism>
<comment type="function">
    <text evidence="1">Together with the chaperonin GroEL, plays an essential role in assisting protein folding. The GroEL-GroES system forms a nano-cage that allows encapsulation of the non-native substrate proteins and provides a physical environment optimized to promote and accelerate protein folding. GroES binds to the apical surface of the GroEL ring, thereby capping the opening of the GroEL channel.</text>
</comment>
<comment type="subunit">
    <text evidence="1">Heptamer of 7 subunits arranged in a ring. Interacts with the chaperonin GroEL.</text>
</comment>
<comment type="subcellular location">
    <subcellularLocation>
        <location evidence="1">Cytoplasm</location>
    </subcellularLocation>
</comment>
<comment type="similarity">
    <text evidence="1 2">Belongs to the GroES chaperonin family.</text>
</comment>
<protein>
    <recommendedName>
        <fullName evidence="1">Co-chaperonin GroES</fullName>
    </recommendedName>
    <alternativeName>
        <fullName evidence="1">10 kDa chaperonin</fullName>
    </alternativeName>
    <alternativeName>
        <fullName evidence="1">Chaperonin-10</fullName>
        <shortName evidence="1">Cpn10</shortName>
    </alternativeName>
</protein>